<sequence length="128" mass="13286">MRTALLLLAALAVATGPALTLRCHVCTSSSNCKHSVVCPASSRFCKTTNTVEPLRGNLVKKDCAESCTPSYTLQGQVSSGTSSTQCCQEDLCNEKLHNAAPTRTALAHSALSLGLALSLLAVILAPSL</sequence>
<reference key="1">
    <citation type="journal article" date="1995" name="J. Cell Biol.">
        <title>The human E48 antigen, highly homologous to the murine Ly-6 antigen ThB, is a GPI-anchored molecule apparently involved in keratinocyte cell-cell adhesion.</title>
        <authorList>
            <person name="Brakenhoff R.H."/>
            <person name="Gerretsen M."/>
            <person name="Knippels E.M.C."/>
            <person name="van Dijk M."/>
            <person name="van Essen H."/>
            <person name="Weghuis D.O."/>
            <person name="Sinke R.J."/>
            <person name="Snow G.B."/>
            <person name="van Dongen G.A.M.S."/>
        </authorList>
    </citation>
    <scope>NUCLEOTIDE SEQUENCE [MRNA]</scope>
    <scope>PROTEIN SEQUENCE OF 21-33</scope>
    <scope>GPI-ANCHOR</scope>
</reference>
<reference key="2">
    <citation type="journal article" date="1997" name="J. Immunol.">
        <title>A gain of novel tissue specificity in the human Ly-6 gene E48.</title>
        <authorList>
            <person name="Brakenhoff R.H."/>
            <person name="van Dijk M."/>
            <person name="Rood-Knippels E.M.C."/>
            <person name="Snow G.B."/>
        </authorList>
    </citation>
    <scope>NUCLEOTIDE SEQUENCE [GENOMIC DNA]</scope>
    <scope>VARIANT THR-10</scope>
</reference>
<reference key="3">
    <citation type="journal article" date="2004" name="Nat. Genet.">
        <title>Complete sequencing and characterization of 21,243 full-length human cDNAs.</title>
        <authorList>
            <person name="Ota T."/>
            <person name="Suzuki Y."/>
            <person name="Nishikawa T."/>
            <person name="Otsuki T."/>
            <person name="Sugiyama T."/>
            <person name="Irie R."/>
            <person name="Wakamatsu A."/>
            <person name="Hayashi K."/>
            <person name="Sato H."/>
            <person name="Nagai K."/>
            <person name="Kimura K."/>
            <person name="Makita H."/>
            <person name="Sekine M."/>
            <person name="Obayashi M."/>
            <person name="Nishi T."/>
            <person name="Shibahara T."/>
            <person name="Tanaka T."/>
            <person name="Ishii S."/>
            <person name="Yamamoto J."/>
            <person name="Saito K."/>
            <person name="Kawai Y."/>
            <person name="Isono Y."/>
            <person name="Nakamura Y."/>
            <person name="Nagahari K."/>
            <person name="Murakami K."/>
            <person name="Yasuda T."/>
            <person name="Iwayanagi T."/>
            <person name="Wagatsuma M."/>
            <person name="Shiratori A."/>
            <person name="Sudo H."/>
            <person name="Hosoiri T."/>
            <person name="Kaku Y."/>
            <person name="Kodaira H."/>
            <person name="Kondo H."/>
            <person name="Sugawara M."/>
            <person name="Takahashi M."/>
            <person name="Kanda K."/>
            <person name="Yokoi T."/>
            <person name="Furuya T."/>
            <person name="Kikkawa E."/>
            <person name="Omura Y."/>
            <person name="Abe K."/>
            <person name="Kamihara K."/>
            <person name="Katsuta N."/>
            <person name="Sato K."/>
            <person name="Tanikawa M."/>
            <person name="Yamazaki M."/>
            <person name="Ninomiya K."/>
            <person name="Ishibashi T."/>
            <person name="Yamashita H."/>
            <person name="Murakawa K."/>
            <person name="Fujimori K."/>
            <person name="Tanai H."/>
            <person name="Kimata M."/>
            <person name="Watanabe M."/>
            <person name="Hiraoka S."/>
            <person name="Chiba Y."/>
            <person name="Ishida S."/>
            <person name="Ono Y."/>
            <person name="Takiguchi S."/>
            <person name="Watanabe S."/>
            <person name="Yosida M."/>
            <person name="Hotuta T."/>
            <person name="Kusano J."/>
            <person name="Kanehori K."/>
            <person name="Takahashi-Fujii A."/>
            <person name="Hara H."/>
            <person name="Tanase T.-O."/>
            <person name="Nomura Y."/>
            <person name="Togiya S."/>
            <person name="Komai F."/>
            <person name="Hara R."/>
            <person name="Takeuchi K."/>
            <person name="Arita M."/>
            <person name="Imose N."/>
            <person name="Musashino K."/>
            <person name="Yuuki H."/>
            <person name="Oshima A."/>
            <person name="Sasaki N."/>
            <person name="Aotsuka S."/>
            <person name="Yoshikawa Y."/>
            <person name="Matsunawa H."/>
            <person name="Ichihara T."/>
            <person name="Shiohata N."/>
            <person name="Sano S."/>
            <person name="Moriya S."/>
            <person name="Momiyama H."/>
            <person name="Satoh N."/>
            <person name="Takami S."/>
            <person name="Terashima Y."/>
            <person name="Suzuki O."/>
            <person name="Nakagawa S."/>
            <person name="Senoh A."/>
            <person name="Mizoguchi H."/>
            <person name="Goto Y."/>
            <person name="Shimizu F."/>
            <person name="Wakebe H."/>
            <person name="Hishigaki H."/>
            <person name="Watanabe T."/>
            <person name="Sugiyama A."/>
            <person name="Takemoto M."/>
            <person name="Kawakami B."/>
            <person name="Yamazaki M."/>
            <person name="Watanabe K."/>
            <person name="Kumagai A."/>
            <person name="Itakura S."/>
            <person name="Fukuzumi Y."/>
            <person name="Fujimori Y."/>
            <person name="Komiyama M."/>
            <person name="Tashiro H."/>
            <person name="Tanigami A."/>
            <person name="Fujiwara T."/>
            <person name="Ono T."/>
            <person name="Yamada K."/>
            <person name="Fujii Y."/>
            <person name="Ozaki K."/>
            <person name="Hirao M."/>
            <person name="Ohmori Y."/>
            <person name="Kawabata A."/>
            <person name="Hikiji T."/>
            <person name="Kobatake N."/>
            <person name="Inagaki H."/>
            <person name="Ikema Y."/>
            <person name="Okamoto S."/>
            <person name="Okitani R."/>
            <person name="Kawakami T."/>
            <person name="Noguchi S."/>
            <person name="Itoh T."/>
            <person name="Shigeta K."/>
            <person name="Senba T."/>
            <person name="Matsumura K."/>
            <person name="Nakajima Y."/>
            <person name="Mizuno T."/>
            <person name="Morinaga M."/>
            <person name="Sasaki M."/>
            <person name="Togashi T."/>
            <person name="Oyama M."/>
            <person name="Hata H."/>
            <person name="Watanabe M."/>
            <person name="Komatsu T."/>
            <person name="Mizushima-Sugano J."/>
            <person name="Satoh T."/>
            <person name="Shirai Y."/>
            <person name="Takahashi Y."/>
            <person name="Nakagawa K."/>
            <person name="Okumura K."/>
            <person name="Nagase T."/>
            <person name="Nomura N."/>
            <person name="Kikuchi H."/>
            <person name="Masuho Y."/>
            <person name="Yamashita R."/>
            <person name="Nakai K."/>
            <person name="Yada T."/>
            <person name="Nakamura Y."/>
            <person name="Ohara O."/>
            <person name="Isogai T."/>
            <person name="Sugano S."/>
        </authorList>
    </citation>
    <scope>NUCLEOTIDE SEQUENCE [LARGE SCALE MRNA]</scope>
    <source>
        <tissue>Tongue</tissue>
    </source>
</reference>
<reference key="4">
    <citation type="submission" date="2005-09" db="EMBL/GenBank/DDBJ databases">
        <authorList>
            <person name="Mural R.J."/>
            <person name="Istrail S."/>
            <person name="Sutton G.G."/>
            <person name="Florea L."/>
            <person name="Halpern A.L."/>
            <person name="Mobarry C.M."/>
            <person name="Lippert R."/>
            <person name="Walenz B."/>
            <person name="Shatkay H."/>
            <person name="Dew I."/>
            <person name="Miller J.R."/>
            <person name="Flanigan M.J."/>
            <person name="Edwards N.J."/>
            <person name="Bolanos R."/>
            <person name="Fasulo D."/>
            <person name="Halldorsson B.V."/>
            <person name="Hannenhalli S."/>
            <person name="Turner R."/>
            <person name="Yooseph S."/>
            <person name="Lu F."/>
            <person name="Nusskern D.R."/>
            <person name="Shue B.C."/>
            <person name="Zheng X.H."/>
            <person name="Zhong F."/>
            <person name="Delcher A.L."/>
            <person name="Huson D.H."/>
            <person name="Kravitz S.A."/>
            <person name="Mouchard L."/>
            <person name="Reinert K."/>
            <person name="Remington K.A."/>
            <person name="Clark A.G."/>
            <person name="Waterman M.S."/>
            <person name="Eichler E.E."/>
            <person name="Adams M.D."/>
            <person name="Hunkapiller M.W."/>
            <person name="Myers E.W."/>
            <person name="Venter J.C."/>
        </authorList>
    </citation>
    <scope>NUCLEOTIDE SEQUENCE [LARGE SCALE GENOMIC DNA]</scope>
</reference>
<reference key="5">
    <citation type="journal article" date="2004" name="Genome Res.">
        <title>The status, quality, and expansion of the NIH full-length cDNA project: the Mammalian Gene Collection (MGC).</title>
        <authorList>
            <consortium name="The MGC Project Team"/>
        </authorList>
    </citation>
    <scope>NUCLEOTIDE SEQUENCE [LARGE SCALE MRNA]</scope>
    <scope>VARIANT THR-10</scope>
    <source>
        <tissue>Brain</tissue>
    </source>
</reference>
<reference key="6">
    <citation type="journal article" date="1998" name="J. Immunol.">
        <title>Characterization and mapping to human chromosome 8q24.3 of Ly-6-related gene 9804 encoding an apparent homologue of mouse TSA-1.</title>
        <authorList>
            <person name="Shan X."/>
            <person name="Bourdeau A."/>
            <person name="Rhoton A."/>
            <person name="Wells D.E."/>
            <person name="Cohen E.H."/>
            <person name="Landgraf B.E."/>
            <person name="Palfree R.G.E."/>
        </authorList>
    </citation>
    <scope>NUCLEOTIDE SEQUENCE [GENOMIC DNA] OF 18-96</scope>
</reference>
<reference key="7">
    <citation type="journal article" date="2004" name="Protein Sci.">
        <title>Signal peptide prediction based on analysis of experimentally verified cleavage sites.</title>
        <authorList>
            <person name="Zhang Z."/>
            <person name="Henzel W.J."/>
        </authorList>
    </citation>
    <scope>PROTEIN SEQUENCE OF 21-35</scope>
</reference>
<name>LY6D_HUMAN</name>
<evidence type="ECO:0000250" key="1"/>
<evidence type="ECO:0000255" key="2"/>
<evidence type="ECO:0000269" key="3">
    <source>
    </source>
</evidence>
<evidence type="ECO:0000269" key="4">
    <source>
    </source>
</evidence>
<evidence type="ECO:0000269" key="5">
    <source>
    </source>
</evidence>
<evidence type="ECO:0000269" key="6">
    <source>
    </source>
</evidence>
<evidence type="ECO:0000305" key="7"/>
<accession>Q14210</accession>
<accession>B2R5F1</accession>
<accession>D3DWJ0</accession>
<accession>O43783</accession>
<accession>Q6GTV9</accession>
<accession>Q8TBD4</accession>
<accession>Q92933</accession>
<proteinExistence type="evidence at protein level"/>
<dbReference type="EMBL" id="X82693">
    <property type="protein sequence ID" value="CAA58014.1"/>
    <property type="molecule type" value="mRNA"/>
</dbReference>
<dbReference type="EMBL" id="Y12642">
    <property type="protein sequence ID" value="CAA73189.1"/>
    <property type="molecule type" value="Genomic_DNA"/>
</dbReference>
<dbReference type="EMBL" id="AK312164">
    <property type="protein sequence ID" value="BAG35098.1"/>
    <property type="molecule type" value="mRNA"/>
</dbReference>
<dbReference type="EMBL" id="CH471162">
    <property type="protein sequence ID" value="EAW82297.1"/>
    <property type="molecule type" value="Genomic_DNA"/>
</dbReference>
<dbReference type="EMBL" id="CH471162">
    <property type="protein sequence ID" value="EAW82298.1"/>
    <property type="molecule type" value="Genomic_DNA"/>
</dbReference>
<dbReference type="EMBL" id="BC022806">
    <property type="protein sequence ID" value="AAH22806.1"/>
    <property type="status" value="ALT_INIT"/>
    <property type="molecule type" value="mRNA"/>
</dbReference>
<dbReference type="EMBL" id="BC031330">
    <property type="protein sequence ID" value="AAH31330.1"/>
    <property type="molecule type" value="mRNA"/>
</dbReference>
<dbReference type="EMBL" id="U66837">
    <property type="protein sequence ID" value="AAB07524.1"/>
    <property type="molecule type" value="Genomic_DNA"/>
</dbReference>
<dbReference type="CCDS" id="CCDS6390.1"/>
<dbReference type="PIR" id="A57321">
    <property type="entry name" value="A57321"/>
</dbReference>
<dbReference type="RefSeq" id="NP_003686.1">
    <property type="nucleotide sequence ID" value="NM_003695.3"/>
</dbReference>
<dbReference type="SMR" id="Q14210"/>
<dbReference type="BioGRID" id="114148">
    <property type="interactions" value="19"/>
</dbReference>
<dbReference type="FunCoup" id="Q14210">
    <property type="interactions" value="25"/>
</dbReference>
<dbReference type="IntAct" id="Q14210">
    <property type="interactions" value="17"/>
</dbReference>
<dbReference type="MINT" id="Q14210"/>
<dbReference type="STRING" id="9606.ENSP00000301263"/>
<dbReference type="GlyGen" id="Q14210">
    <property type="glycosylation" value="1 site, 1 O-linked glycan (1 site)"/>
</dbReference>
<dbReference type="PhosphoSitePlus" id="Q14210"/>
<dbReference type="BioMuta" id="LY6D"/>
<dbReference type="DMDM" id="2501524"/>
<dbReference type="MassIVE" id="Q14210"/>
<dbReference type="PaxDb" id="9606-ENSP00000301263"/>
<dbReference type="PeptideAtlas" id="Q14210"/>
<dbReference type="ProteomicsDB" id="59932"/>
<dbReference type="Pumba" id="Q14210"/>
<dbReference type="ABCD" id="Q14210">
    <property type="antibodies" value="1 sequenced antibody"/>
</dbReference>
<dbReference type="Antibodypedia" id="14540">
    <property type="antibodies" value="82 antibodies from 18 providers"/>
</dbReference>
<dbReference type="CPTC" id="Q14210">
    <property type="antibodies" value="4 antibodies"/>
</dbReference>
<dbReference type="DNASU" id="8581"/>
<dbReference type="Ensembl" id="ENST00000301263.5">
    <property type="protein sequence ID" value="ENSP00000301263.4"/>
    <property type="gene ID" value="ENSG00000167656.5"/>
</dbReference>
<dbReference type="GeneID" id="8581"/>
<dbReference type="KEGG" id="hsa:8581"/>
<dbReference type="MANE-Select" id="ENST00000301263.5">
    <property type="protein sequence ID" value="ENSP00000301263.4"/>
    <property type="RefSeq nucleotide sequence ID" value="NM_003695.3"/>
    <property type="RefSeq protein sequence ID" value="NP_003686.1"/>
</dbReference>
<dbReference type="UCSC" id="uc003yxf.2">
    <property type="organism name" value="human"/>
</dbReference>
<dbReference type="AGR" id="HGNC:13348"/>
<dbReference type="CTD" id="8581"/>
<dbReference type="DisGeNET" id="8581"/>
<dbReference type="GeneCards" id="LY6D"/>
<dbReference type="HGNC" id="HGNC:13348">
    <property type="gene designation" value="LY6D"/>
</dbReference>
<dbReference type="HPA" id="ENSG00000167656">
    <property type="expression patterns" value="Tissue enhanced (esophagus, skin, vagina)"/>
</dbReference>
<dbReference type="MIM" id="606204">
    <property type="type" value="gene"/>
</dbReference>
<dbReference type="neXtProt" id="NX_Q14210"/>
<dbReference type="OpenTargets" id="ENSG00000167656"/>
<dbReference type="PharmGKB" id="PA134928593"/>
<dbReference type="VEuPathDB" id="HostDB:ENSG00000167656"/>
<dbReference type="eggNOG" id="ENOG502SGKP">
    <property type="taxonomic scope" value="Eukaryota"/>
</dbReference>
<dbReference type="GeneTree" id="ENSGT00730000111514"/>
<dbReference type="HOGENOM" id="CLU_161471_0_0_1"/>
<dbReference type="InParanoid" id="Q14210"/>
<dbReference type="OMA" id="LVKKDCA"/>
<dbReference type="OrthoDB" id="9449056at2759"/>
<dbReference type="PAN-GO" id="Q14210">
    <property type="GO annotations" value="2 GO annotations based on evolutionary models"/>
</dbReference>
<dbReference type="PhylomeDB" id="Q14210"/>
<dbReference type="TreeFam" id="TF336080"/>
<dbReference type="PathwayCommons" id="Q14210"/>
<dbReference type="Reactome" id="R-HSA-163125">
    <property type="pathway name" value="Post-translational modification: synthesis of GPI-anchored proteins"/>
</dbReference>
<dbReference type="SignaLink" id="Q14210"/>
<dbReference type="BioGRID-ORCS" id="8581">
    <property type="hits" value="15 hits in 1139 CRISPR screens"/>
</dbReference>
<dbReference type="ChiTaRS" id="LY6D">
    <property type="organism name" value="human"/>
</dbReference>
<dbReference type="GenomeRNAi" id="8581"/>
<dbReference type="Pharos" id="Q14210">
    <property type="development level" value="Tbio"/>
</dbReference>
<dbReference type="PRO" id="PR:Q14210"/>
<dbReference type="Proteomes" id="UP000005640">
    <property type="component" value="Chromosome 8"/>
</dbReference>
<dbReference type="RNAct" id="Q14210">
    <property type="molecule type" value="protein"/>
</dbReference>
<dbReference type="Bgee" id="ENSG00000167656">
    <property type="expression patterns" value="Expressed in lower esophagus mucosa and 116 other cell types or tissues"/>
</dbReference>
<dbReference type="GO" id="GO:0009986">
    <property type="term" value="C:cell surface"/>
    <property type="evidence" value="ECO:0000318"/>
    <property type="project" value="GO_Central"/>
</dbReference>
<dbReference type="GO" id="GO:0005576">
    <property type="term" value="C:extracellular region"/>
    <property type="evidence" value="ECO:0000304"/>
    <property type="project" value="Reactome"/>
</dbReference>
<dbReference type="GO" id="GO:0016020">
    <property type="term" value="C:membrane"/>
    <property type="evidence" value="ECO:0000304"/>
    <property type="project" value="ProtInc"/>
</dbReference>
<dbReference type="GO" id="GO:0005886">
    <property type="term" value="C:plasma membrane"/>
    <property type="evidence" value="ECO:0000304"/>
    <property type="project" value="Reactome"/>
</dbReference>
<dbReference type="GO" id="GO:0098552">
    <property type="term" value="C:side of membrane"/>
    <property type="evidence" value="ECO:0007669"/>
    <property type="project" value="UniProtKB-KW"/>
</dbReference>
<dbReference type="GO" id="GO:0007155">
    <property type="term" value="P:cell adhesion"/>
    <property type="evidence" value="ECO:0000304"/>
    <property type="project" value="ProtInc"/>
</dbReference>
<dbReference type="GO" id="GO:0030098">
    <property type="term" value="P:lymphocyte differentiation"/>
    <property type="evidence" value="ECO:0000318"/>
    <property type="project" value="GO_Central"/>
</dbReference>
<dbReference type="GO" id="GO:0035634">
    <property type="term" value="P:response to stilbenoid"/>
    <property type="evidence" value="ECO:0007669"/>
    <property type="project" value="Ensembl"/>
</dbReference>
<dbReference type="CDD" id="cd23542">
    <property type="entry name" value="TFP_LU_ECD_Ly6D"/>
    <property type="match status" value="1"/>
</dbReference>
<dbReference type="FunFam" id="2.10.60.10:FF:000003">
    <property type="entry name" value="lymphocyte antigen 6E isoform X1"/>
    <property type="match status" value="1"/>
</dbReference>
<dbReference type="Gene3D" id="2.10.60.10">
    <property type="entry name" value="CD59"/>
    <property type="match status" value="1"/>
</dbReference>
<dbReference type="InterPro" id="IPR018363">
    <property type="entry name" value="CD59_antigen_CS"/>
</dbReference>
<dbReference type="InterPro" id="IPR016054">
    <property type="entry name" value="LY6_UPA_recep-like"/>
</dbReference>
<dbReference type="InterPro" id="IPR042339">
    <property type="entry name" value="Ly6D"/>
</dbReference>
<dbReference type="InterPro" id="IPR045860">
    <property type="entry name" value="Snake_toxin-like_sf"/>
</dbReference>
<dbReference type="InterPro" id="IPR035076">
    <property type="entry name" value="Toxin/TOLIP"/>
</dbReference>
<dbReference type="PANTHER" id="PTHR16982">
    <property type="entry name" value="LYMPHOCYTE ANTIGEN 6D"/>
    <property type="match status" value="1"/>
</dbReference>
<dbReference type="PANTHER" id="PTHR16982:SF2">
    <property type="entry name" value="LYMPHOCYTE ANTIGEN 6D"/>
    <property type="match status" value="1"/>
</dbReference>
<dbReference type="Pfam" id="PF00087">
    <property type="entry name" value="Toxin_TOLIP"/>
    <property type="match status" value="1"/>
</dbReference>
<dbReference type="SMART" id="SM00134">
    <property type="entry name" value="LU"/>
    <property type="match status" value="1"/>
</dbReference>
<dbReference type="SUPFAM" id="SSF57302">
    <property type="entry name" value="Snake toxin-like"/>
    <property type="match status" value="1"/>
</dbReference>
<dbReference type="PROSITE" id="PS00983">
    <property type="entry name" value="LY6_UPAR"/>
    <property type="match status" value="1"/>
</dbReference>
<keyword id="KW-0130">Cell adhesion</keyword>
<keyword id="KW-1003">Cell membrane</keyword>
<keyword id="KW-0903">Direct protein sequencing</keyword>
<keyword id="KW-1015">Disulfide bond</keyword>
<keyword id="KW-0325">Glycoprotein</keyword>
<keyword id="KW-0336">GPI-anchor</keyword>
<keyword id="KW-0449">Lipoprotein</keyword>
<keyword id="KW-0472">Membrane</keyword>
<keyword id="KW-1267">Proteomics identification</keyword>
<keyword id="KW-1185">Reference proteome</keyword>
<keyword id="KW-0732">Signal</keyword>
<protein>
    <recommendedName>
        <fullName>Lymphocyte antigen 6D</fullName>
        <shortName>Ly-6D</shortName>
    </recommendedName>
    <alternativeName>
        <fullName>E48 antigen</fullName>
    </alternativeName>
</protein>
<comment type="function">
    <text>May act as a specification marker at earliest stage specification of lymphocytes between B- and T-cell development. Marks the earliest stage of B-cell specification.</text>
</comment>
<comment type="interaction">
    <interactant intactId="EBI-1965225">
        <id>Q14210</id>
    </interactant>
    <interactant intactId="EBI-13059134">
        <id>Q13520</id>
        <label>AQP6</label>
    </interactant>
    <organismsDiffer>false</organismsDiffer>
    <experiments>3</experiments>
</comment>
<comment type="interaction">
    <interactant intactId="EBI-1965225">
        <id>Q14210</id>
    </interactant>
    <interactant intactId="EBI-18535450">
        <id>Q9GZR5</id>
        <label>ELOVL4</label>
    </interactant>
    <organismsDiffer>false</organismsDiffer>
    <experiments>3</experiments>
</comment>
<comment type="interaction">
    <interactant intactId="EBI-1965225">
        <id>Q14210</id>
    </interactant>
    <interactant intactId="EBI-2548832">
        <id>Q8N661</id>
        <label>TMEM86B</label>
    </interactant>
    <organismsDiffer>false</organismsDiffer>
    <experiments>3</experiments>
</comment>
<comment type="subcellular location">
    <subcellularLocation>
        <location>Cell membrane</location>
        <topology>Lipid-anchor</topology>
        <topology>GPI-anchor</topology>
    </subcellularLocation>
</comment>
<comment type="tissue specificity">
    <text>Expressed exclusively at the outer cell surface of transitional epithelia and the keratinocyte of stratified squamous epithelia.</text>
</comment>
<comment type="sequence caution" evidence="7">
    <conflict type="erroneous initiation">
        <sequence resource="EMBL-CDS" id="AAH22806"/>
    </conflict>
</comment>
<gene>
    <name type="primary">LY6D</name>
    <name type="synonym">E48</name>
</gene>
<organism>
    <name type="scientific">Homo sapiens</name>
    <name type="common">Human</name>
    <dbReference type="NCBI Taxonomy" id="9606"/>
    <lineage>
        <taxon>Eukaryota</taxon>
        <taxon>Metazoa</taxon>
        <taxon>Chordata</taxon>
        <taxon>Craniata</taxon>
        <taxon>Vertebrata</taxon>
        <taxon>Euteleostomi</taxon>
        <taxon>Mammalia</taxon>
        <taxon>Eutheria</taxon>
        <taxon>Euarchontoglires</taxon>
        <taxon>Primates</taxon>
        <taxon>Haplorrhini</taxon>
        <taxon>Catarrhini</taxon>
        <taxon>Hominidae</taxon>
        <taxon>Homo</taxon>
    </lineage>
</organism>
<feature type="signal peptide" evidence="3 5">
    <location>
        <begin position="1"/>
        <end position="20"/>
    </location>
</feature>
<feature type="chain" id="PRO_0000036134" description="Lymphocyte antigen 6D">
    <location>
        <begin position="21"/>
        <end position="98"/>
    </location>
</feature>
<feature type="propeptide" id="PRO_0000036135" description="Removed in mature form" evidence="2">
    <location>
        <begin position="99"/>
        <end position="128"/>
    </location>
</feature>
<feature type="domain" description="UPAR/Ly6">
    <location>
        <begin position="21"/>
        <end position="108"/>
    </location>
</feature>
<feature type="lipid moiety-binding region" description="GPI-anchor amidated asparagine" evidence="2">
    <location>
        <position position="98"/>
    </location>
</feature>
<feature type="disulfide bond" evidence="1">
    <location>
        <begin position="23"/>
        <end position="45"/>
    </location>
</feature>
<feature type="disulfide bond" evidence="1">
    <location>
        <begin position="26"/>
        <end position="32"/>
    </location>
</feature>
<feature type="disulfide bond" evidence="1">
    <location>
        <begin position="38"/>
        <end position="63"/>
    </location>
</feature>
<feature type="disulfide bond" evidence="1">
    <location>
        <begin position="67"/>
        <end position="86"/>
    </location>
</feature>
<feature type="disulfide bond" evidence="1">
    <location>
        <begin position="87"/>
        <end position="92"/>
    </location>
</feature>
<feature type="sequence variant" id="VAR_038712" description="In dbSNP:rs2572925." evidence="4 6">
    <original>A</original>
    <variation>T</variation>
    <location>
        <position position="10"/>
    </location>
</feature>
<feature type="sequence conflict" description="In Ref. 6; AAB07524." evidence="7" ref="6">
    <original>K</original>
    <variation>E</variation>
    <location>
        <position position="60"/>
    </location>
</feature>
<feature type="sequence conflict" description="In Ref. 6; AAB07524." evidence="7" ref="6">
    <original>Q</original>
    <variation>L</variation>
    <location>
        <position position="76"/>
    </location>
</feature>